<reference key="1">
    <citation type="submission" date="2004-11" db="EMBL/GenBank/DDBJ databases">
        <authorList>
            <consortium name="The German cDNA consortium"/>
        </authorList>
    </citation>
    <scope>NUCLEOTIDE SEQUENCE [LARGE SCALE MRNA]</scope>
    <source>
        <tissue>Kidney</tissue>
    </source>
</reference>
<dbReference type="EMBL" id="CR858436">
    <property type="protein sequence ID" value="CAH90665.1"/>
    <property type="molecule type" value="mRNA"/>
</dbReference>
<dbReference type="RefSeq" id="NP_001125361.1">
    <property type="nucleotide sequence ID" value="NM_001131889.2"/>
</dbReference>
<dbReference type="SMR" id="Q5RC45"/>
<dbReference type="STRING" id="9601.ENSPPYP00000003622"/>
<dbReference type="GeneID" id="100172263"/>
<dbReference type="KEGG" id="pon:100172263"/>
<dbReference type="CTD" id="283238"/>
<dbReference type="eggNOG" id="KOG0255">
    <property type="taxonomic scope" value="Eukaryota"/>
</dbReference>
<dbReference type="InParanoid" id="Q5RC45"/>
<dbReference type="OrthoDB" id="2544694at2759"/>
<dbReference type="Proteomes" id="UP000001595">
    <property type="component" value="Unplaced"/>
</dbReference>
<dbReference type="GO" id="GO:0005886">
    <property type="term" value="C:plasma membrane"/>
    <property type="evidence" value="ECO:0007669"/>
    <property type="project" value="UniProtKB-SubCell"/>
</dbReference>
<dbReference type="GO" id="GO:0022857">
    <property type="term" value="F:transmembrane transporter activity"/>
    <property type="evidence" value="ECO:0007669"/>
    <property type="project" value="InterPro"/>
</dbReference>
<dbReference type="GO" id="GO:0006811">
    <property type="term" value="P:monoatomic ion transport"/>
    <property type="evidence" value="ECO:0007669"/>
    <property type="project" value="UniProtKB-KW"/>
</dbReference>
<dbReference type="GO" id="GO:0008202">
    <property type="term" value="P:steroid metabolic process"/>
    <property type="evidence" value="ECO:0000250"/>
    <property type="project" value="UniProtKB"/>
</dbReference>
<dbReference type="GO" id="GO:0035382">
    <property type="term" value="P:sterol transmembrane transport"/>
    <property type="evidence" value="ECO:0000250"/>
    <property type="project" value="UniProtKB"/>
</dbReference>
<dbReference type="FunFam" id="1.20.1250.20:FF:001088">
    <property type="entry name" value="Solute carrier family 22 member 9"/>
    <property type="match status" value="1"/>
</dbReference>
<dbReference type="Gene3D" id="1.20.1250.20">
    <property type="entry name" value="MFS general substrate transporter like domains"/>
    <property type="match status" value="1"/>
</dbReference>
<dbReference type="InterPro" id="IPR020846">
    <property type="entry name" value="MFS_dom"/>
</dbReference>
<dbReference type="InterPro" id="IPR005828">
    <property type="entry name" value="MFS_sugar_transport-like"/>
</dbReference>
<dbReference type="InterPro" id="IPR036259">
    <property type="entry name" value="MFS_trans_sf"/>
</dbReference>
<dbReference type="PANTHER" id="PTHR24064">
    <property type="entry name" value="SOLUTE CARRIER FAMILY 22 MEMBER"/>
    <property type="match status" value="1"/>
</dbReference>
<dbReference type="Pfam" id="PF00083">
    <property type="entry name" value="Sugar_tr"/>
    <property type="match status" value="1"/>
</dbReference>
<dbReference type="SUPFAM" id="SSF103473">
    <property type="entry name" value="MFS general substrate transporter"/>
    <property type="match status" value="1"/>
</dbReference>
<dbReference type="PROSITE" id="PS50850">
    <property type="entry name" value="MFS"/>
    <property type="match status" value="1"/>
</dbReference>
<sequence length="330" mass="37086">MGFDVLLDQVGGMGRFQICLIAFFCIANILLFPNIVLENFTAFTPGHRCWVPLLDNDTVSDNDTGTLSKDDLLRISIPLDSNLRPQKCQRFIHPQWQLLHLKGTFPNTNETDTEPCVDGWVYDRTSFLSTIVTEWDLVCESQSLKSMVQSLFMAGSLLGGLIYGHLSDRVGRKIICKLCFLQLAISNTCAAFAPTFLVYCILRFLAGFSTMTILGNTFILSLEWTLPQSRSMAIMVLLCSYSVGQMLLGGLAFAIQDWRVLQLTVSTPIIVLFLSSWKMVESARWLIINNQLDEGLKELRRVAHTNGKKNTEETLTAEVIWKGEMIAVIK</sequence>
<proteinExistence type="evidence at transcript level"/>
<name>S22AO_PONAB</name>
<comment type="function">
    <text evidence="1">Renal transmembrane organic anion/dicarboxylate exchanger that participates in the reabsorption of conjugated steroids including estradiol-17beta-D-glucuronide (or 17beta-estradiol 17-O-(beta-D-glucuronate)), androstanediol glucuronide (or 5alpha-androstane-3alpha,17beta-diol 3-O-(beta-D-glucuronate)), and estrone 3-sulfate, as well as bile acids taurocholate and glycocholate, driven by an outward gradient of dicarboxylates such as glutarate or succinate.</text>
</comment>
<comment type="catalytic activity">
    <reaction evidence="1">
        <text>estrone 3-sulfate(out) + glutarate(in) = estrone 3-sulfate(in) + glutarate(out)</text>
        <dbReference type="Rhea" id="RHEA:72151"/>
        <dbReference type="ChEBI" id="CHEBI:30921"/>
        <dbReference type="ChEBI" id="CHEBI:60050"/>
    </reaction>
</comment>
<comment type="catalytic activity">
    <reaction evidence="1">
        <text>17beta-estradiol 17-O-(beta-D-glucuronate)(out) + glutarate(in) = 17beta-estradiol 17-O-(beta-D-glucuronate)(in) + glutarate(out)</text>
        <dbReference type="Rhea" id="RHEA:72155"/>
        <dbReference type="ChEBI" id="CHEBI:30921"/>
        <dbReference type="ChEBI" id="CHEBI:82961"/>
    </reaction>
</comment>
<comment type="catalytic activity">
    <reaction evidence="1">
        <text>taurocholate(out) + glutarate(in) = taurocholate(in) + glutarate(out)</text>
        <dbReference type="Rhea" id="RHEA:72159"/>
        <dbReference type="ChEBI" id="CHEBI:30921"/>
        <dbReference type="ChEBI" id="CHEBI:36257"/>
    </reaction>
</comment>
<comment type="catalytic activity">
    <reaction evidence="1">
        <text>5alpha-androstane-3alpha,17beta-diol 3-O-(beta-D-glucuronate)(out) + glutarate(in) = 5alpha-androstane-3alpha,17beta-diol 3-O-(beta-D-glucuronate)(in) + glutarate(out)</text>
        <dbReference type="Rhea" id="RHEA:72175"/>
        <dbReference type="ChEBI" id="CHEBI:30921"/>
        <dbReference type="ChEBI" id="CHEBI:191859"/>
    </reaction>
</comment>
<comment type="catalytic activity">
    <reaction evidence="1">
        <text>glycocholate(out) + glutarate(in) = glycocholate(in) + glutarate(out)</text>
        <dbReference type="Rhea" id="RHEA:72351"/>
        <dbReference type="ChEBI" id="CHEBI:29746"/>
        <dbReference type="ChEBI" id="CHEBI:30921"/>
    </reaction>
</comment>
<comment type="catalytic activity">
    <reaction evidence="1">
        <text>dehydroepiandrosterone 3-sulfate(out) + glutarate(in) = dehydroepiandrosterone 3-sulfate(in) + glutarate(out)</text>
        <dbReference type="Rhea" id="RHEA:72355"/>
        <dbReference type="ChEBI" id="CHEBI:30921"/>
        <dbReference type="ChEBI" id="CHEBI:57905"/>
    </reaction>
</comment>
<comment type="catalytic activity">
    <reaction evidence="1">
        <text>glutarate(in) + succinate(out) = glutarate(out) + succinate(in)</text>
        <dbReference type="Rhea" id="RHEA:72359"/>
        <dbReference type="ChEBI" id="CHEBI:30031"/>
        <dbReference type="ChEBI" id="CHEBI:30921"/>
    </reaction>
</comment>
<comment type="subcellular location">
    <subcellularLocation>
        <location evidence="3">Cell membrane</location>
        <topology evidence="3">Multi-pass membrane protein</topology>
    </subcellularLocation>
</comment>
<comment type="similarity">
    <text evidence="3">Belongs to the major facilitator (TC 2.A.1) superfamily. Organic cation transporter (TC 2.A.1.19) family.</text>
</comment>
<organism>
    <name type="scientific">Pongo abelii</name>
    <name type="common">Sumatran orangutan</name>
    <name type="synonym">Pongo pygmaeus abelii</name>
    <dbReference type="NCBI Taxonomy" id="9601"/>
    <lineage>
        <taxon>Eukaryota</taxon>
        <taxon>Metazoa</taxon>
        <taxon>Chordata</taxon>
        <taxon>Craniata</taxon>
        <taxon>Vertebrata</taxon>
        <taxon>Euteleostomi</taxon>
        <taxon>Mammalia</taxon>
        <taxon>Eutheria</taxon>
        <taxon>Euarchontoglires</taxon>
        <taxon>Primates</taxon>
        <taxon>Haplorrhini</taxon>
        <taxon>Catarrhini</taxon>
        <taxon>Hominidae</taxon>
        <taxon>Pongo</taxon>
    </lineage>
</organism>
<evidence type="ECO:0000250" key="1">
    <source>
        <dbReference type="UniProtKB" id="Q8N4F4"/>
    </source>
</evidence>
<evidence type="ECO:0000255" key="2"/>
<evidence type="ECO:0000305" key="3"/>
<accession>Q5RC45</accession>
<gene>
    <name evidence="1" type="primary">SLC22A24</name>
</gene>
<feature type="chain" id="PRO_0000317527" description="Steroid transmembrane transporter SLC22A24">
    <location>
        <begin position="1"/>
        <end position="330"/>
    </location>
</feature>
<feature type="transmembrane region" description="Helical" evidence="2">
    <location>
        <begin position="16"/>
        <end position="36"/>
    </location>
</feature>
<feature type="transmembrane region" description="Helical" evidence="2">
    <location>
        <begin position="146"/>
        <end position="166"/>
    </location>
</feature>
<feature type="transmembrane region" description="Helical" evidence="2">
    <location>
        <begin position="178"/>
        <end position="200"/>
    </location>
</feature>
<feature type="transmembrane region" description="Helical" evidence="2">
    <location>
        <begin position="204"/>
        <end position="226"/>
    </location>
</feature>
<feature type="transmembrane region" description="Helical" evidence="2">
    <location>
        <begin position="234"/>
        <end position="254"/>
    </location>
</feature>
<feature type="transmembrane region" description="Helical" evidence="2">
    <location>
        <begin position="258"/>
        <end position="278"/>
    </location>
</feature>
<keyword id="KW-1003">Cell membrane</keyword>
<keyword id="KW-0406">Ion transport</keyword>
<keyword id="KW-0443">Lipid metabolism</keyword>
<keyword id="KW-0445">Lipid transport</keyword>
<keyword id="KW-0472">Membrane</keyword>
<keyword id="KW-1185">Reference proteome</keyword>
<keyword id="KW-0753">Steroid metabolism</keyword>
<keyword id="KW-0812">Transmembrane</keyword>
<keyword id="KW-1133">Transmembrane helix</keyword>
<keyword id="KW-0813">Transport</keyword>
<protein>
    <recommendedName>
        <fullName evidence="3">Steroid transmembrane transporter SLC22A24</fullName>
    </recommendedName>
    <alternativeName>
        <fullName evidence="1">Solute carrier family 22 member 24</fullName>
    </alternativeName>
</protein>